<sequence length="650" mass="70287">MGILETITGPRDLDRLSREQMVELAAEIRQFLVAEVSKTGGHLGPNLGVVETTLAIHRVFDSPRDAIVFDTGHQSYVHKLVTGRQDFSRLREAGGLAGYPQRSESEHDIVESSHASSSLSWADGISRAFGITGQTDRHVVAVVGDGALTGGMTWEALNNISDDNTRKLIIVVNDNGRSYAPTIGGMARFLNTVRTRRTYRGLYETSQRVFGVFGAPGDSLYRGLRGGLHGFLTRVTDNEALYSNLDIKYLGPIDGHDQQAMEEALEQARDYGAPVIVHAITEKGRGYEPARRDVADQFHAVGQIDPETGEPIDPSHAVSWTSVFADEILALADEDPRIVGITAAMLRPVGLHKFAEKHPDRVHDVGIAEQHAVTSAAGLAYGGLHPVVALYATFVNRAFDQVLMDVALHRAGVTFVLDRAGVTGPDGPSHHGMWDLALLQIVPHIRLSAPRDATRLREELGEAVKVDDAPTVVRFSKGSVGDEIEAVRRLDDGVDVLHESASKDVLIVTVGPMATMGIEVAERLAAQGIGATVVDPRWVVPVPRSVVELGGTHRLVVTIEDGVVVGGIGTRIRQDLREAGIDTGVTELGLPDEFLDHGTRSQILERVGLTPQHIARDVVAQVLGSRVPSARPLPEDAERVPMRAEDDEQA</sequence>
<name>DXS_CLASE</name>
<evidence type="ECO:0000255" key="1">
    <source>
        <dbReference type="HAMAP-Rule" id="MF_00315"/>
    </source>
</evidence>
<evidence type="ECO:0000256" key="2">
    <source>
        <dbReference type="SAM" id="MobiDB-lite"/>
    </source>
</evidence>
<proteinExistence type="inferred from homology"/>
<accession>B0RC26</accession>
<feature type="chain" id="PRO_1000079086" description="1-deoxy-D-xylulose-5-phosphate synthase">
    <location>
        <begin position="1"/>
        <end position="650"/>
    </location>
</feature>
<feature type="region of interest" description="Disordered" evidence="2">
    <location>
        <begin position="629"/>
        <end position="650"/>
    </location>
</feature>
<feature type="compositionally biased region" description="Basic and acidic residues" evidence="2">
    <location>
        <begin position="633"/>
        <end position="644"/>
    </location>
</feature>
<feature type="binding site" evidence="1">
    <location>
        <position position="73"/>
    </location>
    <ligand>
        <name>thiamine diphosphate</name>
        <dbReference type="ChEBI" id="CHEBI:58937"/>
    </ligand>
</feature>
<feature type="binding site" evidence="1">
    <location>
        <begin position="113"/>
        <end position="115"/>
    </location>
    <ligand>
        <name>thiamine diphosphate</name>
        <dbReference type="ChEBI" id="CHEBI:58937"/>
    </ligand>
</feature>
<feature type="binding site" evidence="1">
    <location>
        <position position="145"/>
    </location>
    <ligand>
        <name>Mg(2+)</name>
        <dbReference type="ChEBI" id="CHEBI:18420"/>
    </ligand>
</feature>
<feature type="binding site" evidence="1">
    <location>
        <begin position="146"/>
        <end position="147"/>
    </location>
    <ligand>
        <name>thiamine diphosphate</name>
        <dbReference type="ChEBI" id="CHEBI:58937"/>
    </ligand>
</feature>
<feature type="binding site" evidence="1">
    <location>
        <position position="175"/>
    </location>
    <ligand>
        <name>Mg(2+)</name>
        <dbReference type="ChEBI" id="CHEBI:18420"/>
    </ligand>
</feature>
<feature type="binding site" evidence="1">
    <location>
        <position position="175"/>
    </location>
    <ligand>
        <name>thiamine diphosphate</name>
        <dbReference type="ChEBI" id="CHEBI:58937"/>
    </ligand>
</feature>
<feature type="binding site" evidence="1">
    <location>
        <position position="287"/>
    </location>
    <ligand>
        <name>thiamine diphosphate</name>
        <dbReference type="ChEBI" id="CHEBI:58937"/>
    </ligand>
</feature>
<feature type="binding site" evidence="1">
    <location>
        <position position="369"/>
    </location>
    <ligand>
        <name>thiamine diphosphate</name>
        <dbReference type="ChEBI" id="CHEBI:58937"/>
    </ligand>
</feature>
<dbReference type="EC" id="2.2.1.7" evidence="1"/>
<dbReference type="EMBL" id="AM849034">
    <property type="protein sequence ID" value="CAQ01754.1"/>
    <property type="molecule type" value="Genomic_DNA"/>
</dbReference>
<dbReference type="RefSeq" id="WP_012299009.1">
    <property type="nucleotide sequence ID" value="NZ_MZMN01000003.1"/>
</dbReference>
<dbReference type="SMR" id="B0RC26"/>
<dbReference type="STRING" id="31964.CMS1644"/>
<dbReference type="KEGG" id="cms:CMS1644"/>
<dbReference type="eggNOG" id="COG1154">
    <property type="taxonomic scope" value="Bacteria"/>
</dbReference>
<dbReference type="HOGENOM" id="CLU_009227_1_4_11"/>
<dbReference type="OrthoDB" id="9803371at2"/>
<dbReference type="UniPathway" id="UPA00064">
    <property type="reaction ID" value="UER00091"/>
</dbReference>
<dbReference type="Proteomes" id="UP000001318">
    <property type="component" value="Chromosome"/>
</dbReference>
<dbReference type="GO" id="GO:0005829">
    <property type="term" value="C:cytosol"/>
    <property type="evidence" value="ECO:0007669"/>
    <property type="project" value="TreeGrafter"/>
</dbReference>
<dbReference type="GO" id="GO:0008661">
    <property type="term" value="F:1-deoxy-D-xylulose-5-phosphate synthase activity"/>
    <property type="evidence" value="ECO:0007669"/>
    <property type="project" value="UniProtKB-UniRule"/>
</dbReference>
<dbReference type="GO" id="GO:0000287">
    <property type="term" value="F:magnesium ion binding"/>
    <property type="evidence" value="ECO:0007669"/>
    <property type="project" value="UniProtKB-UniRule"/>
</dbReference>
<dbReference type="GO" id="GO:0030976">
    <property type="term" value="F:thiamine pyrophosphate binding"/>
    <property type="evidence" value="ECO:0007669"/>
    <property type="project" value="UniProtKB-UniRule"/>
</dbReference>
<dbReference type="GO" id="GO:0052865">
    <property type="term" value="P:1-deoxy-D-xylulose 5-phosphate biosynthetic process"/>
    <property type="evidence" value="ECO:0007669"/>
    <property type="project" value="UniProtKB-UniPathway"/>
</dbReference>
<dbReference type="GO" id="GO:0019288">
    <property type="term" value="P:isopentenyl diphosphate biosynthetic process, methylerythritol 4-phosphate pathway"/>
    <property type="evidence" value="ECO:0007669"/>
    <property type="project" value="TreeGrafter"/>
</dbReference>
<dbReference type="GO" id="GO:0016114">
    <property type="term" value="P:terpenoid biosynthetic process"/>
    <property type="evidence" value="ECO:0007669"/>
    <property type="project" value="UniProtKB-UniRule"/>
</dbReference>
<dbReference type="GO" id="GO:0009228">
    <property type="term" value="P:thiamine biosynthetic process"/>
    <property type="evidence" value="ECO:0007669"/>
    <property type="project" value="UniProtKB-UniRule"/>
</dbReference>
<dbReference type="CDD" id="cd02007">
    <property type="entry name" value="TPP_DXS"/>
    <property type="match status" value="1"/>
</dbReference>
<dbReference type="CDD" id="cd07033">
    <property type="entry name" value="TPP_PYR_DXS_TK_like"/>
    <property type="match status" value="1"/>
</dbReference>
<dbReference type="FunFam" id="3.40.50.920:FF:000002">
    <property type="entry name" value="1-deoxy-D-xylulose-5-phosphate synthase"/>
    <property type="match status" value="1"/>
</dbReference>
<dbReference type="FunFam" id="3.40.50.970:FF:000005">
    <property type="entry name" value="1-deoxy-D-xylulose-5-phosphate synthase"/>
    <property type="match status" value="1"/>
</dbReference>
<dbReference type="Gene3D" id="3.40.50.920">
    <property type="match status" value="1"/>
</dbReference>
<dbReference type="Gene3D" id="3.40.50.970">
    <property type="match status" value="2"/>
</dbReference>
<dbReference type="HAMAP" id="MF_00315">
    <property type="entry name" value="DXP_synth"/>
    <property type="match status" value="1"/>
</dbReference>
<dbReference type="InterPro" id="IPR005477">
    <property type="entry name" value="Dxylulose-5-P_synthase"/>
</dbReference>
<dbReference type="InterPro" id="IPR029061">
    <property type="entry name" value="THDP-binding"/>
</dbReference>
<dbReference type="InterPro" id="IPR009014">
    <property type="entry name" value="Transketo_C/PFOR_II"/>
</dbReference>
<dbReference type="InterPro" id="IPR005475">
    <property type="entry name" value="Transketolase-like_Pyr-bd"/>
</dbReference>
<dbReference type="InterPro" id="IPR020826">
    <property type="entry name" value="Transketolase_BS"/>
</dbReference>
<dbReference type="InterPro" id="IPR033248">
    <property type="entry name" value="Transketolase_C"/>
</dbReference>
<dbReference type="NCBIfam" id="TIGR00204">
    <property type="entry name" value="dxs"/>
    <property type="match status" value="1"/>
</dbReference>
<dbReference type="NCBIfam" id="NF003933">
    <property type="entry name" value="PRK05444.2-2"/>
    <property type="match status" value="1"/>
</dbReference>
<dbReference type="PANTHER" id="PTHR43322">
    <property type="entry name" value="1-D-DEOXYXYLULOSE 5-PHOSPHATE SYNTHASE-RELATED"/>
    <property type="match status" value="1"/>
</dbReference>
<dbReference type="PANTHER" id="PTHR43322:SF5">
    <property type="entry name" value="1-DEOXY-D-XYLULOSE-5-PHOSPHATE SYNTHASE, CHLOROPLASTIC"/>
    <property type="match status" value="1"/>
</dbReference>
<dbReference type="Pfam" id="PF13292">
    <property type="entry name" value="DXP_synthase_N"/>
    <property type="match status" value="1"/>
</dbReference>
<dbReference type="Pfam" id="PF02779">
    <property type="entry name" value="Transket_pyr"/>
    <property type="match status" value="1"/>
</dbReference>
<dbReference type="Pfam" id="PF02780">
    <property type="entry name" value="Transketolase_C"/>
    <property type="match status" value="1"/>
</dbReference>
<dbReference type="SMART" id="SM00861">
    <property type="entry name" value="Transket_pyr"/>
    <property type="match status" value="1"/>
</dbReference>
<dbReference type="SUPFAM" id="SSF52518">
    <property type="entry name" value="Thiamin diphosphate-binding fold (THDP-binding)"/>
    <property type="match status" value="2"/>
</dbReference>
<dbReference type="SUPFAM" id="SSF52922">
    <property type="entry name" value="TK C-terminal domain-like"/>
    <property type="match status" value="1"/>
</dbReference>
<dbReference type="PROSITE" id="PS00802">
    <property type="entry name" value="TRANSKETOLASE_2"/>
    <property type="match status" value="1"/>
</dbReference>
<comment type="function">
    <text evidence="1">Catalyzes the acyloin condensation reaction between C atoms 2 and 3 of pyruvate and glyceraldehyde 3-phosphate to yield 1-deoxy-D-xylulose-5-phosphate (DXP).</text>
</comment>
<comment type="catalytic activity">
    <reaction evidence="1">
        <text>D-glyceraldehyde 3-phosphate + pyruvate + H(+) = 1-deoxy-D-xylulose 5-phosphate + CO2</text>
        <dbReference type="Rhea" id="RHEA:12605"/>
        <dbReference type="ChEBI" id="CHEBI:15361"/>
        <dbReference type="ChEBI" id="CHEBI:15378"/>
        <dbReference type="ChEBI" id="CHEBI:16526"/>
        <dbReference type="ChEBI" id="CHEBI:57792"/>
        <dbReference type="ChEBI" id="CHEBI:59776"/>
        <dbReference type="EC" id="2.2.1.7"/>
    </reaction>
</comment>
<comment type="cofactor">
    <cofactor evidence="1">
        <name>Mg(2+)</name>
        <dbReference type="ChEBI" id="CHEBI:18420"/>
    </cofactor>
    <text evidence="1">Binds 1 Mg(2+) ion per subunit.</text>
</comment>
<comment type="cofactor">
    <cofactor evidence="1">
        <name>thiamine diphosphate</name>
        <dbReference type="ChEBI" id="CHEBI:58937"/>
    </cofactor>
    <text evidence="1">Binds 1 thiamine pyrophosphate per subunit.</text>
</comment>
<comment type="pathway">
    <text evidence="1">Metabolic intermediate biosynthesis; 1-deoxy-D-xylulose 5-phosphate biosynthesis; 1-deoxy-D-xylulose 5-phosphate from D-glyceraldehyde 3-phosphate and pyruvate: step 1/1.</text>
</comment>
<comment type="subunit">
    <text evidence="1">Homodimer.</text>
</comment>
<comment type="similarity">
    <text evidence="1">Belongs to the transketolase family. DXPS subfamily.</text>
</comment>
<protein>
    <recommendedName>
        <fullName evidence="1">1-deoxy-D-xylulose-5-phosphate synthase</fullName>
        <ecNumber evidence="1">2.2.1.7</ecNumber>
    </recommendedName>
    <alternativeName>
        <fullName evidence="1">1-deoxyxylulose-5-phosphate synthase</fullName>
        <shortName evidence="1">DXP synthase</shortName>
        <shortName evidence="1">DXPS</shortName>
    </alternativeName>
</protein>
<gene>
    <name evidence="1" type="primary">dxs</name>
    <name type="ordered locus">CMS1644</name>
</gene>
<keyword id="KW-0414">Isoprene biosynthesis</keyword>
<keyword id="KW-0460">Magnesium</keyword>
<keyword id="KW-0479">Metal-binding</keyword>
<keyword id="KW-0784">Thiamine biosynthesis</keyword>
<keyword id="KW-0786">Thiamine pyrophosphate</keyword>
<keyword id="KW-0808">Transferase</keyword>
<organism>
    <name type="scientific">Clavibacter sepedonicus</name>
    <name type="common">Clavibacter michiganensis subsp. sepedonicus</name>
    <dbReference type="NCBI Taxonomy" id="31964"/>
    <lineage>
        <taxon>Bacteria</taxon>
        <taxon>Bacillati</taxon>
        <taxon>Actinomycetota</taxon>
        <taxon>Actinomycetes</taxon>
        <taxon>Micrococcales</taxon>
        <taxon>Microbacteriaceae</taxon>
        <taxon>Clavibacter</taxon>
    </lineage>
</organism>
<reference key="1">
    <citation type="journal article" date="2008" name="J. Bacteriol.">
        <title>Genome of the actinomycete plant pathogen Clavibacter michiganensis subsp. sepedonicus suggests recent niche adaptation.</title>
        <authorList>
            <person name="Bentley S.D."/>
            <person name="Corton C."/>
            <person name="Brown S.E."/>
            <person name="Barron A."/>
            <person name="Clark L."/>
            <person name="Doggett J."/>
            <person name="Harris B."/>
            <person name="Ormond D."/>
            <person name="Quail M.A."/>
            <person name="May G."/>
            <person name="Francis D."/>
            <person name="Knudson D."/>
            <person name="Parkhill J."/>
            <person name="Ishimaru C.A."/>
        </authorList>
    </citation>
    <scope>NUCLEOTIDE SEQUENCE [LARGE SCALE GENOMIC DNA]</scope>
    <source>
        <strain>ATCC 33113 / DSM 20744 / JCM 9667 / LMG 2889 / ICMP 2535 / C-1</strain>
    </source>
</reference>